<organism>
    <name type="scientific">Rattus norvegicus</name>
    <name type="common">Rat</name>
    <dbReference type="NCBI Taxonomy" id="10116"/>
    <lineage>
        <taxon>Eukaryota</taxon>
        <taxon>Metazoa</taxon>
        <taxon>Chordata</taxon>
        <taxon>Craniata</taxon>
        <taxon>Vertebrata</taxon>
        <taxon>Euteleostomi</taxon>
        <taxon>Mammalia</taxon>
        <taxon>Eutheria</taxon>
        <taxon>Euarchontoglires</taxon>
        <taxon>Glires</taxon>
        <taxon>Rodentia</taxon>
        <taxon>Myomorpha</taxon>
        <taxon>Muroidea</taxon>
        <taxon>Muridae</taxon>
        <taxon>Murinae</taxon>
        <taxon>Rattus</taxon>
    </lineage>
</organism>
<name>COX8B_RAT</name>
<proteinExistence type="evidence at protein level"/>
<accession>P16221</accession>
<sequence>MPRLPPILRLLQAPEKYTVIPKARISSKPAKSPTSAMDQAVGMSVIIAGFMVPAGWVLSHLESYKRSSAA</sequence>
<keyword id="KW-0903">Direct protein sequencing</keyword>
<keyword id="KW-0472">Membrane</keyword>
<keyword id="KW-0496">Mitochondrion</keyword>
<keyword id="KW-0999">Mitochondrion inner membrane</keyword>
<keyword id="KW-1185">Reference proteome</keyword>
<keyword id="KW-0809">Transit peptide</keyword>
<keyword id="KW-0812">Transmembrane</keyword>
<keyword id="KW-1133">Transmembrane helix</keyword>
<evidence type="ECO:0000250" key="1">
    <source>
        <dbReference type="UniProtKB" id="P10175"/>
    </source>
</evidence>
<evidence type="ECO:0000269" key="2">
    <source>
    </source>
</evidence>
<evidence type="ECO:0000269" key="3">
    <source>
    </source>
</evidence>
<evidence type="ECO:0000305" key="4"/>
<dbReference type="EMBL" id="X64827">
    <property type="protein sequence ID" value="CAA46039.1"/>
    <property type="molecule type" value="mRNA"/>
</dbReference>
<dbReference type="EMBL" id="U40836">
    <property type="protein sequence ID" value="AAC52906.1"/>
    <property type="molecule type" value="Genomic_DNA"/>
</dbReference>
<dbReference type="EMBL" id="U40835">
    <property type="protein sequence ID" value="AAC52906.1"/>
    <property type="status" value="JOINED"/>
    <property type="molecule type" value="Genomic_DNA"/>
</dbReference>
<dbReference type="PIR" id="S24171">
    <property type="entry name" value="S24171"/>
</dbReference>
<dbReference type="RefSeq" id="NP_036918.2">
    <property type="nucleotide sequence ID" value="NM_012786.3"/>
</dbReference>
<dbReference type="SMR" id="P16221"/>
<dbReference type="FunCoup" id="P16221">
    <property type="interactions" value="1"/>
</dbReference>
<dbReference type="STRING" id="10116.ENSRNOP00000019679"/>
<dbReference type="PaxDb" id="10116-ENSRNOP00000019679"/>
<dbReference type="GeneID" id="25250"/>
<dbReference type="KEGG" id="rno:25250"/>
<dbReference type="UCSC" id="RGD:2386">
    <property type="organism name" value="rat"/>
</dbReference>
<dbReference type="AGR" id="RGD:2386"/>
<dbReference type="CTD" id="12869"/>
<dbReference type="RGD" id="2386">
    <property type="gene designation" value="Cox8b"/>
</dbReference>
<dbReference type="eggNOG" id="ENOG502SB3F">
    <property type="taxonomic scope" value="Eukaryota"/>
</dbReference>
<dbReference type="HOGENOM" id="CLU_203368_0_0_1"/>
<dbReference type="InParanoid" id="P16221"/>
<dbReference type="OrthoDB" id="8931496at2759"/>
<dbReference type="PhylomeDB" id="P16221"/>
<dbReference type="TreeFam" id="TF105070"/>
<dbReference type="UniPathway" id="UPA00705"/>
<dbReference type="PRO" id="PR:P16221"/>
<dbReference type="Proteomes" id="UP000002494">
    <property type="component" value="Chromosome 1"/>
</dbReference>
<dbReference type="Bgee" id="ENSRNOG00000014656">
    <property type="expression patterns" value="Expressed in heart and 20 other cell types or tissues"/>
</dbReference>
<dbReference type="GO" id="GO:0005743">
    <property type="term" value="C:mitochondrial inner membrane"/>
    <property type="evidence" value="ECO:0007669"/>
    <property type="project" value="UniProtKB-SubCell"/>
</dbReference>
<dbReference type="GO" id="GO:0005739">
    <property type="term" value="C:mitochondrion"/>
    <property type="evidence" value="ECO:0000318"/>
    <property type="project" value="GO_Central"/>
</dbReference>
<dbReference type="GO" id="GO:0045277">
    <property type="term" value="C:respiratory chain complex IV"/>
    <property type="evidence" value="ECO:0000318"/>
    <property type="project" value="GO_Central"/>
</dbReference>
<dbReference type="GO" id="GO:0004129">
    <property type="term" value="F:cytochrome-c oxidase activity"/>
    <property type="evidence" value="ECO:0000304"/>
    <property type="project" value="RGD"/>
</dbReference>
<dbReference type="GO" id="GO:0006123">
    <property type="term" value="P:mitochondrial electron transport, cytochrome c to oxygen"/>
    <property type="evidence" value="ECO:0000304"/>
    <property type="project" value="RGD"/>
</dbReference>
<dbReference type="GO" id="GO:0009410">
    <property type="term" value="P:response to xenobiotic stimulus"/>
    <property type="evidence" value="ECO:0000270"/>
    <property type="project" value="RGD"/>
</dbReference>
<dbReference type="FunFam" id="4.10.81.10:FF:000001">
    <property type="entry name" value="Cytochrome c oxidase subunit 8B, mitochondrial"/>
    <property type="match status" value="1"/>
</dbReference>
<dbReference type="Gene3D" id="4.10.81.10">
    <property type="entry name" value="Cytochrome c oxidase, subunit 8"/>
    <property type="match status" value="1"/>
</dbReference>
<dbReference type="InterPro" id="IPR003205">
    <property type="entry name" value="Cyt_c_oxidase_su8"/>
</dbReference>
<dbReference type="InterPro" id="IPR036548">
    <property type="entry name" value="Cyt_c_oxidase_su8_sf"/>
</dbReference>
<dbReference type="PANTHER" id="PTHR16717">
    <property type="entry name" value="CYTOCHROME C OXIDASE POLYPEPTIDE VIII"/>
    <property type="match status" value="1"/>
</dbReference>
<dbReference type="PANTHER" id="PTHR16717:SF4">
    <property type="entry name" value="CYTOCHROME C OXIDASE SUBUNIT 8B, MITOCHONDRIAL"/>
    <property type="match status" value="1"/>
</dbReference>
<dbReference type="Pfam" id="PF02285">
    <property type="entry name" value="COX8"/>
    <property type="match status" value="1"/>
</dbReference>
<dbReference type="SUPFAM" id="SSF81431">
    <property type="entry name" value="Mitochondrial cytochrome c oxidase subunit VIIIb (aka IX)"/>
    <property type="match status" value="1"/>
</dbReference>
<feature type="transit peptide" description="Mitochondrion" evidence="2 3">
    <location>
        <begin position="1"/>
        <end position="24"/>
    </location>
</feature>
<feature type="chain" id="PRO_0000006179" description="Cytochrome c oxidase subunit 8B, mitochondrial">
    <location>
        <begin position="25"/>
        <end position="70"/>
    </location>
</feature>
<feature type="topological domain" description="Mitochondrial matrix" evidence="1">
    <location>
        <begin position="25"/>
        <end position="35"/>
    </location>
</feature>
<feature type="transmembrane region" description="Helical" evidence="1">
    <location>
        <begin position="36"/>
        <end position="59"/>
    </location>
</feature>
<feature type="topological domain" description="Mitochondrial intermembrane" evidence="1">
    <location>
        <begin position="60"/>
        <end position="70"/>
    </location>
</feature>
<feature type="sequence conflict" description="In Ref. 1; CAA46039." evidence="4" ref="1">
    <original>I</original>
    <variation>V</variation>
    <location>
        <position position="47"/>
    </location>
</feature>
<reference key="1">
    <citation type="journal article" date="1992" name="Biochim. Biophys. Acta">
        <title>Nucleotide sequence of cDNA encoding subunit VIII of cytochrome c oxidase from rat heart.</title>
        <authorList>
            <person name="Scheja K."/>
            <person name="Kadenbach B."/>
        </authorList>
    </citation>
    <scope>NUCLEOTIDE SEQUENCE [MRNA]</scope>
    <source>
        <strain>Sprague-Dawley</strain>
        <tissue>Heart</tissue>
    </source>
</reference>
<reference key="2">
    <citation type="journal article" date="1996" name="J. Biol. Chem.">
        <title>The role of an E box binding basic helix loop helix protein in the cardiac muscle-specific expression of the rat cytochrome oxidase subunit VIII gene.</title>
        <authorList>
            <person name="Lenka N."/>
            <person name="Basu A."/>
            <person name="Mullick J."/>
            <person name="Avadhani N.G."/>
        </authorList>
    </citation>
    <scope>NUCLEOTIDE SEQUENCE [GENOMIC DNA]</scope>
    <source>
        <strain>Fischer</strain>
    </source>
</reference>
<reference key="3">
    <citation type="journal article" date="1990" name="Biochim. Biophys. Acta">
        <title>Tissue- and species-specific expression of cytochrome c oxidase isozymes in vertebrates.</title>
        <authorList>
            <person name="Kadenbach B."/>
            <person name="Stroh A."/>
            <person name="Becker A."/>
            <person name="Eckersorn C."/>
            <person name="Lottspeich F."/>
        </authorList>
    </citation>
    <scope>PROTEIN SEQUENCE OF 25-62</scope>
    <source>
        <tissue>Heart</tissue>
    </source>
</reference>
<reference key="4">
    <citation type="journal article" date="1995" name="Eur. J. Biochem.">
        <title>Cytochrome-c oxidase in developing rat heart. Enzymic properties and amino-terminal sequences suggest identity of the fetal heart and the adult liver isoform.</title>
        <authorList>
            <person name="Schaegger H."/>
            <person name="Noack H."/>
            <person name="Halangk W."/>
            <person name="Brandt U."/>
            <person name="von Jagow G."/>
        </authorList>
    </citation>
    <scope>PROTEIN SEQUENCE OF 25-39</scope>
    <source>
        <tissue>Heart</tissue>
    </source>
</reference>
<protein>
    <recommendedName>
        <fullName>Cytochrome c oxidase subunit 8B, mitochondrial</fullName>
    </recommendedName>
    <alternativeName>
        <fullName>Cytochrome c oxidase polypeptide VIII-heart</fullName>
    </alternativeName>
    <alternativeName>
        <fullName>Cytochrome c oxidase subunit 8-1</fullName>
    </alternativeName>
    <alternativeName>
        <fullName>Cytochrome c oxidase subunit 8H</fullName>
    </alternativeName>
</protein>
<gene>
    <name type="primary">Cox8b</name>
    <name type="synonym">Cox8h</name>
</gene>
<comment type="function">
    <text evidence="1">Component of the cytochrome c oxidase, the last enzyme in the mitochondrial electron transport chain which drives oxidative phosphorylation. The respiratory chain contains 3 multisubunit complexes succinate dehydrogenase (complex II, CII), ubiquinol-cytochrome c oxidoreductase (cytochrome b-c1 complex, complex III, CIII) and cytochrome c oxidase (complex IV, CIV), that cooperate to transfer electrons derived from NADH and succinate to molecular oxygen, creating an electrochemical gradient over the inner membrane that drives transmembrane transport and the ATP synthase. Cytochrome c oxidase is the component of the respiratory chain that catalyzes the reduction of oxygen to water. Electrons originating from reduced cytochrome c in the intermembrane space (IMS) are transferred via the dinuclear copper A center (CU(A)) of subunit 2 and heme A of subunit 1 to the active site in subunit 1, a binuclear center (BNC) formed by heme A3 and copper B (CU(B)). The BNC reduces molecular oxygen to 2 water molecules using 4 electrons from cytochrome c in the IMS and 4 protons from the mitochondrial matrix.</text>
</comment>
<comment type="pathway">
    <text evidence="1">Energy metabolism; oxidative phosphorylation.</text>
</comment>
<comment type="subunit">
    <text evidence="1">Component of the cytochrome c oxidase (complex IV, CIV), a multisubunit enzyme composed of 14 subunits. The complex is composed of a catalytic core of 3 subunits MT-CO1, MT-CO2 and MT-CO3, encoded in the mitochondrial DNA, and 11 supernumerary subunits COX4I, COX5A, COX5B, COX6A, COX6B, COX6C, COX7A, COX7B, COX7C, COX8 and NDUFA4, which are encoded in the nuclear genome. The complex exists as a monomer or a dimer and forms supercomplexes (SCs) in the inner mitochondrial membrane with NADH-ubiquinone oxidoreductase (complex I, CI) and ubiquinol-cytochrome c oxidoreductase (cytochrome b-c1 complex, complex III, CIII), resulting in different assemblies (supercomplex SCI(1)III(2)IV(1) and megacomplex MCI(2)III(2)IV(2)).</text>
</comment>
<comment type="subcellular location">
    <subcellularLocation>
        <location evidence="1">Mitochondrion inner membrane</location>
        <topology evidence="1">Single-pass membrane protein</topology>
    </subcellularLocation>
</comment>
<comment type="developmental stage">
    <text>Increased levels in liver during prenatal development.</text>
</comment>
<comment type="similarity">
    <text evidence="4">Belongs to the cytochrome c oxidase VIII family.</text>
</comment>